<dbReference type="EMBL" id="AF017777">
    <property type="protein sequence ID" value="AAC28403.1"/>
    <property type="molecule type" value="Genomic_DNA"/>
</dbReference>
<dbReference type="EMBL" id="AE014298">
    <property type="protein sequence ID" value="AAF50828.1"/>
    <property type="molecule type" value="Genomic_DNA"/>
</dbReference>
<dbReference type="EMBL" id="AF132165">
    <property type="protein sequence ID" value="AAD34753.1"/>
    <property type="molecule type" value="mRNA"/>
</dbReference>
<dbReference type="PIR" id="T08427">
    <property type="entry name" value="T08427"/>
</dbReference>
<dbReference type="RefSeq" id="NP_523429.1">
    <property type="nucleotide sequence ID" value="NM_078705.3"/>
</dbReference>
<dbReference type="SMR" id="O61345"/>
<dbReference type="BioGRID" id="59390">
    <property type="interactions" value="10"/>
</dbReference>
<dbReference type="DIP" id="DIP-21277N"/>
<dbReference type="FunCoup" id="O61345">
    <property type="interactions" value="1298"/>
</dbReference>
<dbReference type="IntAct" id="O61345">
    <property type="interactions" value="34"/>
</dbReference>
<dbReference type="STRING" id="7227.FBpp0076918"/>
<dbReference type="PaxDb" id="7227-FBpp0076918"/>
<dbReference type="DNASU" id="33112"/>
<dbReference type="EnsemblMetazoa" id="FBtr0077223">
    <property type="protein sequence ID" value="FBpp0076918"/>
    <property type="gene ID" value="FBgn0015527"/>
</dbReference>
<dbReference type="GeneID" id="33112"/>
<dbReference type="KEGG" id="dme:Dmel_CG1685"/>
<dbReference type="UCSC" id="CG1685-RA">
    <property type="organism name" value="d. melanogaster"/>
</dbReference>
<dbReference type="AGR" id="FB:FBgn0015527"/>
<dbReference type="CTD" id="33112"/>
<dbReference type="FlyBase" id="FBgn0015527">
    <property type="gene designation" value="peng"/>
</dbReference>
<dbReference type="VEuPathDB" id="VectorBase:FBgn0015527"/>
<dbReference type="eggNOG" id="KOG2050">
    <property type="taxonomic scope" value="Eukaryota"/>
</dbReference>
<dbReference type="GeneTree" id="ENSGT00390000015757"/>
<dbReference type="HOGENOM" id="CLU_013994_0_0_1"/>
<dbReference type="InParanoid" id="O61345"/>
<dbReference type="OMA" id="RCRRTEN"/>
<dbReference type="OrthoDB" id="497380at2759"/>
<dbReference type="PhylomeDB" id="O61345"/>
<dbReference type="BioGRID-ORCS" id="33112">
    <property type="hits" value="0 hits in 1 CRISPR screen"/>
</dbReference>
<dbReference type="ChiTaRS" id="Pen">
    <property type="organism name" value="fly"/>
</dbReference>
<dbReference type="GenomeRNAi" id="33112"/>
<dbReference type="PRO" id="PR:O61345"/>
<dbReference type="Proteomes" id="UP000000803">
    <property type="component" value="Chromosome X"/>
</dbReference>
<dbReference type="Bgee" id="FBgn0015527">
    <property type="expression patterns" value="Expressed in eye disc (Drosophila) and 87 other cell types or tissues"/>
</dbReference>
<dbReference type="GO" id="GO:0005730">
    <property type="term" value="C:nucleolus"/>
    <property type="evidence" value="ECO:0000318"/>
    <property type="project" value="GO_Central"/>
</dbReference>
<dbReference type="GO" id="GO:0003729">
    <property type="term" value="F:mRNA binding"/>
    <property type="evidence" value="ECO:0000318"/>
    <property type="project" value="GO_Central"/>
</dbReference>
<dbReference type="GO" id="GO:0007475">
    <property type="term" value="P:apposition of dorsal and ventral imaginal disc-derived wing surfaces"/>
    <property type="evidence" value="ECO:0000315"/>
    <property type="project" value="FlyBase"/>
</dbReference>
<dbReference type="GO" id="GO:0006417">
    <property type="term" value="P:regulation of translation"/>
    <property type="evidence" value="ECO:0000318"/>
    <property type="project" value="GO_Central"/>
</dbReference>
<dbReference type="Gene3D" id="1.25.10.10">
    <property type="entry name" value="Leucine-rich Repeat Variant"/>
    <property type="match status" value="1"/>
</dbReference>
<dbReference type="InterPro" id="IPR011989">
    <property type="entry name" value="ARM-like"/>
</dbReference>
<dbReference type="InterPro" id="IPR016024">
    <property type="entry name" value="ARM-type_fold"/>
</dbReference>
<dbReference type="InterPro" id="IPR012959">
    <property type="entry name" value="CPL_dom"/>
</dbReference>
<dbReference type="InterPro" id="IPR033133">
    <property type="entry name" value="PUM-HD"/>
</dbReference>
<dbReference type="InterPro" id="IPR040059">
    <property type="entry name" value="PUM3"/>
</dbReference>
<dbReference type="InterPro" id="IPR001313">
    <property type="entry name" value="Pumilio_RNA-bd_rpt"/>
</dbReference>
<dbReference type="PANTHER" id="PTHR13389">
    <property type="entry name" value="PUMILIO HOMOLOG 3"/>
    <property type="match status" value="1"/>
</dbReference>
<dbReference type="PANTHER" id="PTHR13389:SF0">
    <property type="entry name" value="PUMILIO HOMOLOG 3"/>
    <property type="match status" value="1"/>
</dbReference>
<dbReference type="Pfam" id="PF08144">
    <property type="entry name" value="CPL"/>
    <property type="match status" value="1"/>
</dbReference>
<dbReference type="Pfam" id="PF22493">
    <property type="entry name" value="PUF_NOP9"/>
    <property type="match status" value="1"/>
</dbReference>
<dbReference type="SMART" id="SM00025">
    <property type="entry name" value="Pumilio"/>
    <property type="match status" value="4"/>
</dbReference>
<dbReference type="SUPFAM" id="SSF48371">
    <property type="entry name" value="ARM repeat"/>
    <property type="match status" value="1"/>
</dbReference>
<dbReference type="PROSITE" id="PS50302">
    <property type="entry name" value="PUM"/>
    <property type="match status" value="5"/>
</dbReference>
<dbReference type="PROSITE" id="PS50303">
    <property type="entry name" value="PUM_HD"/>
    <property type="match status" value="1"/>
</dbReference>
<name>PENG_DROME</name>
<sequence>MVSSEPKGPANVANTASPLKAHESSGKRANGQKFKPGGAGGARKFDKFGGGAGKSFVKPGAGGAKKFDKSGPGGFKKFDKSGATGDKRLGGNKFRGKPQTQPQAPAEGEKQDWNKFKKEKKDLKLKRKSAKDTYEISKEANQIHEKLRCRRTENKDKLVEQIYKVLNVGDTISKVVKAHDTARVIQSMLKYASPALRAEISEKLLPFTVEMCQSKYAQFCVQRMLKYGAPATKAKLVDSLYGHIVRLAGHSIGSGLLDSMYQSATPNQRIYMRQEFYGDLYRKAKDSNVKTLSDTYKEATNMKASILGSVKANLDHVANKQLVDSALVHAVMLEYLRACDEDEEKLEETVTAFAALVPHMLSTKEGSEAAVICFYKSTPKNRRAIIKNIKEHLLKIANHEHGHVFLISLLNALDDTKATKKAIYDHLHGDLKALMSSPYGRRVIQWLVAPGDTTCFHPEFIRTVEEGLAFGKKEKELRRKEILEQIEAPIAQSIAEDAAFWLSNSHIGLVTGDILNHIQGESYEKAASALAQVVVQPEWRISADAAGPQPQDKKKPHNDVEAIIAQATKQRRKLLYVESSSDDEDEDEDEDEESDDEGDEKEQKEAAADDAEPKVKKAKKEPKKPKAKEEEPAAPLVSGIEEAGMHIVLKKILKNDGKREGTPFSQQLLQNLSSDVLKAWLGVNRACFVLLKLVEECPALLDDCKKAIAAERSLSQILADRKTPGAKLLAAKLDIGK</sequence>
<proteinExistence type="evidence at transcript level"/>
<accession>O61345</accession>
<accession>Q9VRH2</accession>
<organism>
    <name type="scientific">Drosophila melanogaster</name>
    <name type="common">Fruit fly</name>
    <dbReference type="NCBI Taxonomy" id="7227"/>
    <lineage>
        <taxon>Eukaryota</taxon>
        <taxon>Metazoa</taxon>
        <taxon>Ecdysozoa</taxon>
        <taxon>Arthropoda</taxon>
        <taxon>Hexapoda</taxon>
        <taxon>Insecta</taxon>
        <taxon>Pterygota</taxon>
        <taxon>Neoptera</taxon>
        <taxon>Endopterygota</taxon>
        <taxon>Diptera</taxon>
        <taxon>Brachycera</taxon>
        <taxon>Muscomorpha</taxon>
        <taxon>Ephydroidea</taxon>
        <taxon>Drosophilidae</taxon>
        <taxon>Drosophila</taxon>
        <taxon>Sophophora</taxon>
    </lineage>
</organism>
<gene>
    <name evidence="3" type="primary">peng</name>
    <name evidence="3" type="synonym">pen</name>
    <name evidence="3" type="ORF">CG1685</name>
</gene>
<protein>
    <recommendedName>
        <fullName>Protein penguin</fullName>
    </recommendedName>
</protein>
<keyword id="KW-1185">Reference proteome</keyword>
<keyword id="KW-0677">Repeat</keyword>
<keyword id="KW-0694">RNA-binding</keyword>
<evidence type="ECO:0000255" key="1">
    <source>
        <dbReference type="PROSITE-ProRule" id="PRU00318"/>
    </source>
</evidence>
<evidence type="ECO:0000256" key="2">
    <source>
        <dbReference type="SAM" id="MobiDB-lite"/>
    </source>
</evidence>
<evidence type="ECO:0000312" key="3">
    <source>
        <dbReference type="FlyBase" id="FBgn0015527"/>
    </source>
</evidence>
<feature type="chain" id="PRO_0000075921" description="Protein penguin">
    <location>
        <begin position="1"/>
        <end position="737"/>
    </location>
</feature>
<feature type="domain" description="PUM-HD" evidence="1">
    <location>
        <begin position="139"/>
        <end position="490"/>
    </location>
</feature>
<feature type="repeat" description="Pumilio 1">
    <location>
        <begin position="167"/>
        <end position="202"/>
    </location>
</feature>
<feature type="repeat" description="Pumilio 2">
    <location>
        <begin position="203"/>
        <end position="238"/>
    </location>
</feature>
<feature type="repeat" description="Pumilio 3">
    <location>
        <begin position="239"/>
        <end position="274"/>
    </location>
</feature>
<feature type="repeat" description="Pumilio 4">
    <location>
        <begin position="388"/>
        <end position="425"/>
    </location>
</feature>
<feature type="repeat" description="Pumilio 5">
    <location>
        <begin position="426"/>
        <end position="462"/>
    </location>
</feature>
<feature type="region of interest" description="Disordered" evidence="2">
    <location>
        <begin position="1"/>
        <end position="128"/>
    </location>
</feature>
<feature type="region of interest" description="Disordered" evidence="2">
    <location>
        <begin position="577"/>
        <end position="638"/>
    </location>
</feature>
<feature type="compositionally biased region" description="Basic and acidic residues" evidence="2">
    <location>
        <begin position="76"/>
        <end position="89"/>
    </location>
</feature>
<feature type="compositionally biased region" description="Basic and acidic residues" evidence="2">
    <location>
        <begin position="107"/>
        <end position="122"/>
    </location>
</feature>
<feature type="compositionally biased region" description="Acidic residues" evidence="2">
    <location>
        <begin position="580"/>
        <end position="600"/>
    </location>
</feature>
<feature type="compositionally biased region" description="Basic and acidic residues" evidence="2">
    <location>
        <begin position="601"/>
        <end position="615"/>
    </location>
</feature>
<feature type="compositionally biased region" description="Basic residues" evidence="2">
    <location>
        <begin position="616"/>
        <end position="626"/>
    </location>
</feature>
<reference key="1">
    <citation type="journal article" date="1998" name="Proc. Natl. Acad. Sci. U.S.A.">
        <title>Data transferability from model organisms to human beings: insights from the functional genomics of the flightless region of Drosophila.</title>
        <authorList>
            <person name="Maleszka R."/>
            <person name="de Couet H.G."/>
            <person name="Miklos G.L.G."/>
        </authorList>
    </citation>
    <scope>NUCLEOTIDE SEQUENCE [GENOMIC DNA]</scope>
    <source>
        <strain>Canton-S</strain>
    </source>
</reference>
<reference key="2">
    <citation type="journal article" date="2000" name="Science">
        <title>The genome sequence of Drosophila melanogaster.</title>
        <authorList>
            <person name="Adams M.D."/>
            <person name="Celniker S.E."/>
            <person name="Holt R.A."/>
            <person name="Evans C.A."/>
            <person name="Gocayne J.D."/>
            <person name="Amanatides P.G."/>
            <person name="Scherer S.E."/>
            <person name="Li P.W."/>
            <person name="Hoskins R.A."/>
            <person name="Galle R.F."/>
            <person name="George R.A."/>
            <person name="Lewis S.E."/>
            <person name="Richards S."/>
            <person name="Ashburner M."/>
            <person name="Henderson S.N."/>
            <person name="Sutton G.G."/>
            <person name="Wortman J.R."/>
            <person name="Yandell M.D."/>
            <person name="Zhang Q."/>
            <person name="Chen L.X."/>
            <person name="Brandon R.C."/>
            <person name="Rogers Y.-H.C."/>
            <person name="Blazej R.G."/>
            <person name="Champe M."/>
            <person name="Pfeiffer B.D."/>
            <person name="Wan K.H."/>
            <person name="Doyle C."/>
            <person name="Baxter E.G."/>
            <person name="Helt G."/>
            <person name="Nelson C.R."/>
            <person name="Miklos G.L.G."/>
            <person name="Abril J.F."/>
            <person name="Agbayani A."/>
            <person name="An H.-J."/>
            <person name="Andrews-Pfannkoch C."/>
            <person name="Baldwin D."/>
            <person name="Ballew R.M."/>
            <person name="Basu A."/>
            <person name="Baxendale J."/>
            <person name="Bayraktaroglu L."/>
            <person name="Beasley E.M."/>
            <person name="Beeson K.Y."/>
            <person name="Benos P.V."/>
            <person name="Berman B.P."/>
            <person name="Bhandari D."/>
            <person name="Bolshakov S."/>
            <person name="Borkova D."/>
            <person name="Botchan M.R."/>
            <person name="Bouck J."/>
            <person name="Brokstein P."/>
            <person name="Brottier P."/>
            <person name="Burtis K.C."/>
            <person name="Busam D.A."/>
            <person name="Butler H."/>
            <person name="Cadieu E."/>
            <person name="Center A."/>
            <person name="Chandra I."/>
            <person name="Cherry J.M."/>
            <person name="Cawley S."/>
            <person name="Dahlke C."/>
            <person name="Davenport L.B."/>
            <person name="Davies P."/>
            <person name="de Pablos B."/>
            <person name="Delcher A."/>
            <person name="Deng Z."/>
            <person name="Mays A.D."/>
            <person name="Dew I."/>
            <person name="Dietz S.M."/>
            <person name="Dodson K."/>
            <person name="Doup L.E."/>
            <person name="Downes M."/>
            <person name="Dugan-Rocha S."/>
            <person name="Dunkov B.C."/>
            <person name="Dunn P."/>
            <person name="Durbin K.J."/>
            <person name="Evangelista C.C."/>
            <person name="Ferraz C."/>
            <person name="Ferriera S."/>
            <person name="Fleischmann W."/>
            <person name="Fosler C."/>
            <person name="Gabrielian A.E."/>
            <person name="Garg N.S."/>
            <person name="Gelbart W.M."/>
            <person name="Glasser K."/>
            <person name="Glodek A."/>
            <person name="Gong F."/>
            <person name="Gorrell J.H."/>
            <person name="Gu Z."/>
            <person name="Guan P."/>
            <person name="Harris M."/>
            <person name="Harris N.L."/>
            <person name="Harvey D.A."/>
            <person name="Heiman T.J."/>
            <person name="Hernandez J.R."/>
            <person name="Houck J."/>
            <person name="Hostin D."/>
            <person name="Houston K.A."/>
            <person name="Howland T.J."/>
            <person name="Wei M.-H."/>
            <person name="Ibegwam C."/>
            <person name="Jalali M."/>
            <person name="Kalush F."/>
            <person name="Karpen G.H."/>
            <person name="Ke Z."/>
            <person name="Kennison J.A."/>
            <person name="Ketchum K.A."/>
            <person name="Kimmel B.E."/>
            <person name="Kodira C.D."/>
            <person name="Kraft C.L."/>
            <person name="Kravitz S."/>
            <person name="Kulp D."/>
            <person name="Lai Z."/>
            <person name="Lasko P."/>
            <person name="Lei Y."/>
            <person name="Levitsky A.A."/>
            <person name="Li J.H."/>
            <person name="Li Z."/>
            <person name="Liang Y."/>
            <person name="Lin X."/>
            <person name="Liu X."/>
            <person name="Mattei B."/>
            <person name="McIntosh T.C."/>
            <person name="McLeod M.P."/>
            <person name="McPherson D."/>
            <person name="Merkulov G."/>
            <person name="Milshina N.V."/>
            <person name="Mobarry C."/>
            <person name="Morris J."/>
            <person name="Moshrefi A."/>
            <person name="Mount S.M."/>
            <person name="Moy M."/>
            <person name="Murphy B."/>
            <person name="Murphy L."/>
            <person name="Muzny D.M."/>
            <person name="Nelson D.L."/>
            <person name="Nelson D.R."/>
            <person name="Nelson K.A."/>
            <person name="Nixon K."/>
            <person name="Nusskern D.R."/>
            <person name="Pacleb J.M."/>
            <person name="Palazzolo M."/>
            <person name="Pittman G.S."/>
            <person name="Pan S."/>
            <person name="Pollard J."/>
            <person name="Puri V."/>
            <person name="Reese M.G."/>
            <person name="Reinert K."/>
            <person name="Remington K."/>
            <person name="Saunders R.D.C."/>
            <person name="Scheeler F."/>
            <person name="Shen H."/>
            <person name="Shue B.C."/>
            <person name="Siden-Kiamos I."/>
            <person name="Simpson M."/>
            <person name="Skupski M.P."/>
            <person name="Smith T.J."/>
            <person name="Spier E."/>
            <person name="Spradling A.C."/>
            <person name="Stapleton M."/>
            <person name="Strong R."/>
            <person name="Sun E."/>
            <person name="Svirskas R."/>
            <person name="Tector C."/>
            <person name="Turner R."/>
            <person name="Venter E."/>
            <person name="Wang A.H."/>
            <person name="Wang X."/>
            <person name="Wang Z.-Y."/>
            <person name="Wassarman D.A."/>
            <person name="Weinstock G.M."/>
            <person name="Weissenbach J."/>
            <person name="Williams S.M."/>
            <person name="Woodage T."/>
            <person name="Worley K.C."/>
            <person name="Wu D."/>
            <person name="Yang S."/>
            <person name="Yao Q.A."/>
            <person name="Ye J."/>
            <person name="Yeh R.-F."/>
            <person name="Zaveri J.S."/>
            <person name="Zhan M."/>
            <person name="Zhang G."/>
            <person name="Zhao Q."/>
            <person name="Zheng L."/>
            <person name="Zheng X.H."/>
            <person name="Zhong F.N."/>
            <person name="Zhong W."/>
            <person name="Zhou X."/>
            <person name="Zhu S.C."/>
            <person name="Zhu X."/>
            <person name="Smith H.O."/>
            <person name="Gibbs R.A."/>
            <person name="Myers E.W."/>
            <person name="Rubin G.M."/>
            <person name="Venter J.C."/>
        </authorList>
    </citation>
    <scope>NUCLEOTIDE SEQUENCE [LARGE SCALE GENOMIC DNA]</scope>
    <source>
        <strain>Berkeley</strain>
    </source>
</reference>
<reference key="3">
    <citation type="journal article" date="2002" name="Genome Biol.">
        <title>Annotation of the Drosophila melanogaster euchromatic genome: a systematic review.</title>
        <authorList>
            <person name="Misra S."/>
            <person name="Crosby M.A."/>
            <person name="Mungall C.J."/>
            <person name="Matthews B.B."/>
            <person name="Campbell K.S."/>
            <person name="Hradecky P."/>
            <person name="Huang Y."/>
            <person name="Kaminker J.S."/>
            <person name="Millburn G.H."/>
            <person name="Prochnik S.E."/>
            <person name="Smith C.D."/>
            <person name="Tupy J.L."/>
            <person name="Whitfield E.J."/>
            <person name="Bayraktaroglu L."/>
            <person name="Berman B.P."/>
            <person name="Bettencourt B.R."/>
            <person name="Celniker S.E."/>
            <person name="de Grey A.D.N.J."/>
            <person name="Drysdale R.A."/>
            <person name="Harris N.L."/>
            <person name="Richter J."/>
            <person name="Russo S."/>
            <person name="Schroeder A.J."/>
            <person name="Shu S.Q."/>
            <person name="Stapleton M."/>
            <person name="Yamada C."/>
            <person name="Ashburner M."/>
            <person name="Gelbart W.M."/>
            <person name="Rubin G.M."/>
            <person name="Lewis S.E."/>
        </authorList>
    </citation>
    <scope>GENOME REANNOTATION</scope>
    <source>
        <strain>Berkeley</strain>
    </source>
</reference>
<reference key="4">
    <citation type="journal article" date="2000" name="Science">
        <title>A Drosophila complementary DNA resource.</title>
        <authorList>
            <person name="Rubin G.M."/>
            <person name="Hong L."/>
            <person name="Brokstein P."/>
            <person name="Evans-Holm M."/>
            <person name="Frise E."/>
            <person name="Stapleton M."/>
            <person name="Harvey D.A."/>
        </authorList>
    </citation>
    <scope>NUCLEOTIDE SEQUENCE [LARGE SCALE MRNA]</scope>
    <source>
        <strain>Berkeley</strain>
        <tissue>Embryo</tissue>
    </source>
</reference>